<sequence>MAGMKEIRGKIKSVQNTRKITKAMEMVAASKMRRAQERMRAARPYADKVRDIAAHMSSATPEYRHPFMVSNEGAKSTGFILVTTDKGLCGGMNTNVLRATLQKFKELEGQGKTVEATAIGGKGLGFLNRLRAKVVSNVVQLGDTPHLEKLIGAVKVQLDMYSEGKVSAVYLAYTRFVNTMKQEPVIEQLLPLSTEQFEAKDDKDSPTPNTSWDYIYEPDAQTVVDELLVRYVEALVYQAVAENMASEQSARMVAMKAASDNAKTVINELQLSYNKSRQAAITKELSEIVGGAAAV</sequence>
<keyword id="KW-0066">ATP synthesis</keyword>
<keyword id="KW-0997">Cell inner membrane</keyword>
<keyword id="KW-1003">Cell membrane</keyword>
<keyword id="KW-0139">CF(1)</keyword>
<keyword id="KW-0375">Hydrogen ion transport</keyword>
<keyword id="KW-0406">Ion transport</keyword>
<keyword id="KW-0472">Membrane</keyword>
<keyword id="KW-1185">Reference proteome</keyword>
<keyword id="KW-0813">Transport</keyword>
<evidence type="ECO:0000255" key="1">
    <source>
        <dbReference type="HAMAP-Rule" id="MF_00815"/>
    </source>
</evidence>
<dbReference type="EMBL" id="CP001043">
    <property type="protein sequence ID" value="ACC72198.1"/>
    <property type="molecule type" value="Genomic_DNA"/>
</dbReference>
<dbReference type="RefSeq" id="WP_012402376.1">
    <property type="nucleotide sequence ID" value="NC_010622.1"/>
</dbReference>
<dbReference type="SMR" id="B2JJ96"/>
<dbReference type="STRING" id="391038.Bphy_3028"/>
<dbReference type="KEGG" id="bph:Bphy_3028"/>
<dbReference type="eggNOG" id="COG0224">
    <property type="taxonomic scope" value="Bacteria"/>
</dbReference>
<dbReference type="HOGENOM" id="CLU_050669_0_1_4"/>
<dbReference type="OrthoDB" id="9812769at2"/>
<dbReference type="Proteomes" id="UP000001192">
    <property type="component" value="Chromosome 1"/>
</dbReference>
<dbReference type="GO" id="GO:0005886">
    <property type="term" value="C:plasma membrane"/>
    <property type="evidence" value="ECO:0007669"/>
    <property type="project" value="UniProtKB-SubCell"/>
</dbReference>
<dbReference type="GO" id="GO:0045259">
    <property type="term" value="C:proton-transporting ATP synthase complex"/>
    <property type="evidence" value="ECO:0007669"/>
    <property type="project" value="UniProtKB-KW"/>
</dbReference>
<dbReference type="GO" id="GO:0005524">
    <property type="term" value="F:ATP binding"/>
    <property type="evidence" value="ECO:0007669"/>
    <property type="project" value="UniProtKB-UniRule"/>
</dbReference>
<dbReference type="GO" id="GO:0046933">
    <property type="term" value="F:proton-transporting ATP synthase activity, rotational mechanism"/>
    <property type="evidence" value="ECO:0007669"/>
    <property type="project" value="UniProtKB-UniRule"/>
</dbReference>
<dbReference type="GO" id="GO:0042777">
    <property type="term" value="P:proton motive force-driven plasma membrane ATP synthesis"/>
    <property type="evidence" value="ECO:0007669"/>
    <property type="project" value="UniProtKB-UniRule"/>
</dbReference>
<dbReference type="CDD" id="cd12151">
    <property type="entry name" value="F1-ATPase_gamma"/>
    <property type="match status" value="1"/>
</dbReference>
<dbReference type="FunFam" id="1.10.287.80:FF:000005">
    <property type="entry name" value="ATP synthase gamma chain"/>
    <property type="match status" value="1"/>
</dbReference>
<dbReference type="Gene3D" id="3.40.1380.10">
    <property type="match status" value="1"/>
</dbReference>
<dbReference type="Gene3D" id="1.10.287.80">
    <property type="entry name" value="ATP synthase, gamma subunit, helix hairpin domain"/>
    <property type="match status" value="2"/>
</dbReference>
<dbReference type="HAMAP" id="MF_00815">
    <property type="entry name" value="ATP_synth_gamma_bact"/>
    <property type="match status" value="1"/>
</dbReference>
<dbReference type="InterPro" id="IPR035968">
    <property type="entry name" value="ATP_synth_F1_ATPase_gsu"/>
</dbReference>
<dbReference type="InterPro" id="IPR000131">
    <property type="entry name" value="ATP_synth_F1_gsu"/>
</dbReference>
<dbReference type="InterPro" id="IPR023632">
    <property type="entry name" value="ATP_synth_F1_gsu_CS"/>
</dbReference>
<dbReference type="NCBIfam" id="TIGR01146">
    <property type="entry name" value="ATPsyn_F1gamma"/>
    <property type="match status" value="1"/>
</dbReference>
<dbReference type="NCBIfam" id="NF004144">
    <property type="entry name" value="PRK05621.1-1"/>
    <property type="match status" value="1"/>
</dbReference>
<dbReference type="PANTHER" id="PTHR11693">
    <property type="entry name" value="ATP SYNTHASE GAMMA CHAIN"/>
    <property type="match status" value="1"/>
</dbReference>
<dbReference type="PANTHER" id="PTHR11693:SF22">
    <property type="entry name" value="ATP SYNTHASE SUBUNIT GAMMA, MITOCHONDRIAL"/>
    <property type="match status" value="1"/>
</dbReference>
<dbReference type="Pfam" id="PF00231">
    <property type="entry name" value="ATP-synt"/>
    <property type="match status" value="1"/>
</dbReference>
<dbReference type="PRINTS" id="PR00126">
    <property type="entry name" value="ATPASEGAMMA"/>
</dbReference>
<dbReference type="SUPFAM" id="SSF52943">
    <property type="entry name" value="ATP synthase (F1-ATPase), gamma subunit"/>
    <property type="match status" value="1"/>
</dbReference>
<dbReference type="PROSITE" id="PS00153">
    <property type="entry name" value="ATPASE_GAMMA"/>
    <property type="match status" value="1"/>
</dbReference>
<organism>
    <name type="scientific">Paraburkholderia phymatum (strain DSM 17167 / CIP 108236 / LMG 21445 / STM815)</name>
    <name type="common">Burkholderia phymatum</name>
    <dbReference type="NCBI Taxonomy" id="391038"/>
    <lineage>
        <taxon>Bacteria</taxon>
        <taxon>Pseudomonadati</taxon>
        <taxon>Pseudomonadota</taxon>
        <taxon>Betaproteobacteria</taxon>
        <taxon>Burkholderiales</taxon>
        <taxon>Burkholderiaceae</taxon>
        <taxon>Paraburkholderia</taxon>
    </lineage>
</organism>
<protein>
    <recommendedName>
        <fullName evidence="1">ATP synthase gamma chain</fullName>
    </recommendedName>
    <alternativeName>
        <fullName evidence="1">ATP synthase F1 sector gamma subunit</fullName>
    </alternativeName>
    <alternativeName>
        <fullName evidence="1">F-ATPase gamma subunit</fullName>
    </alternativeName>
</protein>
<name>ATPG_PARP8</name>
<comment type="function">
    <text evidence="1">Produces ATP from ADP in the presence of a proton gradient across the membrane. The gamma chain is believed to be important in regulating ATPase activity and the flow of protons through the CF(0) complex.</text>
</comment>
<comment type="subunit">
    <text evidence="1">F-type ATPases have 2 components, CF(1) - the catalytic core - and CF(0) - the membrane proton channel. CF(1) has five subunits: alpha(3), beta(3), gamma(1), delta(1), epsilon(1). CF(0) has three main subunits: a, b and c.</text>
</comment>
<comment type="subcellular location">
    <subcellularLocation>
        <location evidence="1">Cell inner membrane</location>
        <topology evidence="1">Peripheral membrane protein</topology>
    </subcellularLocation>
</comment>
<comment type="similarity">
    <text evidence="1">Belongs to the ATPase gamma chain family.</text>
</comment>
<feature type="chain" id="PRO_1000134120" description="ATP synthase gamma chain">
    <location>
        <begin position="1"/>
        <end position="295"/>
    </location>
</feature>
<reference key="1">
    <citation type="journal article" date="2014" name="Stand. Genomic Sci.">
        <title>Complete genome sequence of Burkholderia phymatum STM815(T), a broad host range and efficient nitrogen-fixing symbiont of Mimosa species.</title>
        <authorList>
            <person name="Moulin L."/>
            <person name="Klonowska A."/>
            <person name="Caroline B."/>
            <person name="Booth K."/>
            <person name="Vriezen J.A."/>
            <person name="Melkonian R."/>
            <person name="James E.K."/>
            <person name="Young J.P."/>
            <person name="Bena G."/>
            <person name="Hauser L."/>
            <person name="Land M."/>
            <person name="Kyrpides N."/>
            <person name="Bruce D."/>
            <person name="Chain P."/>
            <person name="Copeland A."/>
            <person name="Pitluck S."/>
            <person name="Woyke T."/>
            <person name="Lizotte-Waniewski M."/>
            <person name="Bristow J."/>
            <person name="Riley M."/>
        </authorList>
    </citation>
    <scope>NUCLEOTIDE SEQUENCE [LARGE SCALE GENOMIC DNA]</scope>
    <source>
        <strain>DSM 17167 / CIP 108236 / LMG 21445 / STM815</strain>
    </source>
</reference>
<proteinExistence type="inferred from homology"/>
<gene>
    <name evidence="1" type="primary">atpG</name>
    <name type="ordered locus">Bphy_3028</name>
</gene>
<accession>B2JJ96</accession>